<proteinExistence type="inferred from homology"/>
<keyword id="KW-0378">Hydrolase</keyword>
<keyword id="KW-1185">Reference proteome</keyword>
<feature type="chain" id="PRO_1000012057" description="Bis(5'-nucleosyl)-tetraphosphatase, symmetrical">
    <location>
        <begin position="1"/>
        <end position="282"/>
    </location>
</feature>
<accession>A1A798</accession>
<reference key="1">
    <citation type="journal article" date="2007" name="J. Bacteriol.">
        <title>The genome sequence of avian pathogenic Escherichia coli strain O1:K1:H7 shares strong similarities with human extraintestinal pathogenic E. coli genomes.</title>
        <authorList>
            <person name="Johnson T.J."/>
            <person name="Kariyawasam S."/>
            <person name="Wannemuehler Y."/>
            <person name="Mangiamele P."/>
            <person name="Johnson S.J."/>
            <person name="Doetkott C."/>
            <person name="Skyberg J.A."/>
            <person name="Lynne A.M."/>
            <person name="Johnson J.R."/>
            <person name="Nolan L.K."/>
        </authorList>
    </citation>
    <scope>NUCLEOTIDE SEQUENCE [LARGE SCALE GENOMIC DNA]</scope>
</reference>
<dbReference type="EC" id="3.6.1.41" evidence="1"/>
<dbReference type="EMBL" id="CP000468">
    <property type="protein sequence ID" value="ABI99537.1"/>
    <property type="molecule type" value="Genomic_DNA"/>
</dbReference>
<dbReference type="RefSeq" id="WP_000257201.1">
    <property type="nucleotide sequence ID" value="NZ_CADILS010000013.1"/>
</dbReference>
<dbReference type="SMR" id="A1A798"/>
<dbReference type="KEGG" id="ecv:APECO1_1933"/>
<dbReference type="HOGENOM" id="CLU_056184_2_0_6"/>
<dbReference type="Proteomes" id="UP000008216">
    <property type="component" value="Chromosome"/>
</dbReference>
<dbReference type="GO" id="GO:0008803">
    <property type="term" value="F:bis(5'-nucleosyl)-tetraphosphatase (symmetrical) activity"/>
    <property type="evidence" value="ECO:0007669"/>
    <property type="project" value="UniProtKB-UniRule"/>
</dbReference>
<dbReference type="CDD" id="cd07422">
    <property type="entry name" value="MPP_ApaH"/>
    <property type="match status" value="1"/>
</dbReference>
<dbReference type="FunFam" id="3.60.21.10:FF:000013">
    <property type="entry name" value="Bis(5'-nucleosyl)-tetraphosphatase, symmetrical"/>
    <property type="match status" value="1"/>
</dbReference>
<dbReference type="Gene3D" id="3.60.21.10">
    <property type="match status" value="1"/>
</dbReference>
<dbReference type="HAMAP" id="MF_00199">
    <property type="entry name" value="ApaH"/>
    <property type="match status" value="1"/>
</dbReference>
<dbReference type="InterPro" id="IPR004617">
    <property type="entry name" value="ApaH"/>
</dbReference>
<dbReference type="InterPro" id="IPR004843">
    <property type="entry name" value="Calcineurin-like_PHP_ApaH"/>
</dbReference>
<dbReference type="InterPro" id="IPR029052">
    <property type="entry name" value="Metallo-depent_PP-like"/>
</dbReference>
<dbReference type="NCBIfam" id="TIGR00668">
    <property type="entry name" value="apaH"/>
    <property type="match status" value="1"/>
</dbReference>
<dbReference type="NCBIfam" id="NF001204">
    <property type="entry name" value="PRK00166.1"/>
    <property type="match status" value="1"/>
</dbReference>
<dbReference type="PANTHER" id="PTHR40942">
    <property type="match status" value="1"/>
</dbReference>
<dbReference type="PANTHER" id="PTHR40942:SF4">
    <property type="entry name" value="CYTOCHROME C5"/>
    <property type="match status" value="1"/>
</dbReference>
<dbReference type="Pfam" id="PF00149">
    <property type="entry name" value="Metallophos"/>
    <property type="match status" value="1"/>
</dbReference>
<dbReference type="PIRSF" id="PIRSF000903">
    <property type="entry name" value="B5n-ttraPtase_sm"/>
    <property type="match status" value="1"/>
</dbReference>
<dbReference type="SUPFAM" id="SSF56300">
    <property type="entry name" value="Metallo-dependent phosphatases"/>
    <property type="match status" value="1"/>
</dbReference>
<protein>
    <recommendedName>
        <fullName evidence="1">Bis(5'-nucleosyl)-tetraphosphatase, symmetrical</fullName>
        <ecNumber evidence="1">3.6.1.41</ecNumber>
    </recommendedName>
    <alternativeName>
        <fullName evidence="1">Ap4A hydrolase</fullName>
    </alternativeName>
    <alternativeName>
        <fullName evidence="1">Diadenosine 5',5'''-P1,P4-tetraphosphate pyrophosphohydrolase</fullName>
    </alternativeName>
    <alternativeName>
        <fullName evidence="1">Diadenosine tetraphosphatase</fullName>
    </alternativeName>
</protein>
<comment type="function">
    <text evidence="1">Hydrolyzes diadenosine 5',5'''-P1,P4-tetraphosphate to yield ADP.</text>
</comment>
<comment type="catalytic activity">
    <reaction evidence="1">
        <text>P(1),P(4)-bis(5'-adenosyl) tetraphosphate + H2O = 2 ADP + 2 H(+)</text>
        <dbReference type="Rhea" id="RHEA:24252"/>
        <dbReference type="ChEBI" id="CHEBI:15377"/>
        <dbReference type="ChEBI" id="CHEBI:15378"/>
        <dbReference type="ChEBI" id="CHEBI:58141"/>
        <dbReference type="ChEBI" id="CHEBI:456216"/>
        <dbReference type="EC" id="3.6.1.41"/>
    </reaction>
</comment>
<comment type="similarity">
    <text evidence="1">Belongs to the Ap4A hydrolase family.</text>
</comment>
<sequence>MATYLIGDVHGCYDELIALLHKVEFTPGKDTLWLTGDLVARGPGSLDVLRYVKSLGDSVRLVLGNHDLHLLAVFAGISRNKPKDRLTPLLEAPDADELLNWLRRQPLLQIDKEKKLVMAHAGITPQWDLQTAKECARDVEAVLSSDSYPFFLDAMYGDMPNNWSPELRGLGRLRFITNAFTRMRFCFPNGQLDMYSKESPEEAPAPLKPWFAIPGPVAEEYNIAFGHWASLEGKGTPEGIYALDTGCCWGGTLTCLRWEDKQYFVQPSNRHKDLSEGEAVAS</sequence>
<gene>
    <name evidence="1" type="primary">apaH</name>
    <name type="ordered locus">Ecok1_00440</name>
    <name type="ORF">APECO1_1933</name>
</gene>
<evidence type="ECO:0000255" key="1">
    <source>
        <dbReference type="HAMAP-Rule" id="MF_00199"/>
    </source>
</evidence>
<name>APAH_ECOK1</name>
<organism>
    <name type="scientific">Escherichia coli O1:K1 / APEC</name>
    <dbReference type="NCBI Taxonomy" id="405955"/>
    <lineage>
        <taxon>Bacteria</taxon>
        <taxon>Pseudomonadati</taxon>
        <taxon>Pseudomonadota</taxon>
        <taxon>Gammaproteobacteria</taxon>
        <taxon>Enterobacterales</taxon>
        <taxon>Enterobacteriaceae</taxon>
        <taxon>Escherichia</taxon>
    </lineage>
</organism>